<evidence type="ECO:0000255" key="1">
    <source>
        <dbReference type="HAMAP-Rule" id="MF_01633"/>
    </source>
</evidence>
<sequence>MKKAVVVFSGGQDSTTCLVQALKEFDEVHAITFDYGQRHKLEIEVAQKIAKDLGVKAHKVMDVGLLNELAISSLTRDDIPVSHELQENGLPNSFVPGRNILFLTLAGIYAYQIGADTVITGVCETDFSGYPDCRDDFVKSMNTALVKGMDRALTIKTPLMWLNKAETWALADQYNALQLVRENTLTCYNGIIGDGCGDCPSCDLRKAGLDEYLNNKDAVMKSLVQKQESEGL</sequence>
<protein>
    <recommendedName>
        <fullName evidence="1">7-cyano-7-deazaguanine synthase</fullName>
        <ecNumber evidence="1">6.3.4.20</ecNumber>
    </recommendedName>
    <alternativeName>
        <fullName evidence="1">7-cyano-7-carbaguanine synthase</fullName>
    </alternativeName>
    <alternativeName>
        <fullName evidence="1">PreQ(0) synthase</fullName>
    </alternativeName>
    <alternativeName>
        <fullName evidence="1">Queuosine biosynthesis protein QueC</fullName>
    </alternativeName>
</protein>
<feature type="chain" id="PRO_0000246957" description="7-cyano-7-deazaguanine synthase">
    <location>
        <begin position="1"/>
        <end position="232"/>
    </location>
</feature>
<feature type="binding site" evidence="1">
    <location>
        <begin position="8"/>
        <end position="18"/>
    </location>
    <ligand>
        <name>ATP</name>
        <dbReference type="ChEBI" id="CHEBI:30616"/>
    </ligand>
</feature>
<feature type="binding site" evidence="1">
    <location>
        <position position="187"/>
    </location>
    <ligand>
        <name>Zn(2+)</name>
        <dbReference type="ChEBI" id="CHEBI:29105"/>
    </ligand>
</feature>
<feature type="binding site" evidence="1">
    <location>
        <position position="196"/>
    </location>
    <ligand>
        <name>Zn(2+)</name>
        <dbReference type="ChEBI" id="CHEBI:29105"/>
    </ligand>
</feature>
<feature type="binding site" evidence="1">
    <location>
        <position position="199"/>
    </location>
    <ligand>
        <name>Zn(2+)</name>
        <dbReference type="ChEBI" id="CHEBI:29105"/>
    </ligand>
</feature>
<feature type="binding site" evidence="1">
    <location>
        <position position="202"/>
    </location>
    <ligand>
        <name>Zn(2+)</name>
        <dbReference type="ChEBI" id="CHEBI:29105"/>
    </ligand>
</feature>
<proteinExistence type="inferred from homology"/>
<comment type="function">
    <text evidence="1">Catalyzes the ATP-dependent conversion of 7-carboxy-7-deazaguanine (CDG) to 7-cyano-7-deazaguanine (preQ(0)).</text>
</comment>
<comment type="catalytic activity">
    <reaction evidence="1">
        <text>7-carboxy-7-deazaguanine + NH4(+) + ATP = 7-cyano-7-deazaguanine + ADP + phosphate + H2O + H(+)</text>
        <dbReference type="Rhea" id="RHEA:27982"/>
        <dbReference type="ChEBI" id="CHEBI:15377"/>
        <dbReference type="ChEBI" id="CHEBI:15378"/>
        <dbReference type="ChEBI" id="CHEBI:28938"/>
        <dbReference type="ChEBI" id="CHEBI:30616"/>
        <dbReference type="ChEBI" id="CHEBI:43474"/>
        <dbReference type="ChEBI" id="CHEBI:45075"/>
        <dbReference type="ChEBI" id="CHEBI:61036"/>
        <dbReference type="ChEBI" id="CHEBI:456216"/>
        <dbReference type="EC" id="6.3.4.20"/>
    </reaction>
</comment>
<comment type="cofactor">
    <cofactor evidence="1">
        <name>Zn(2+)</name>
        <dbReference type="ChEBI" id="CHEBI:29105"/>
    </cofactor>
    <text evidence="1">Binds 1 zinc ion per subunit.</text>
</comment>
<comment type="pathway">
    <text evidence="1">Purine metabolism; 7-cyano-7-deazaguanine biosynthesis.</text>
</comment>
<comment type="similarity">
    <text evidence="1">Belongs to the QueC family.</text>
</comment>
<name>QUEC_VIBPA</name>
<keyword id="KW-0067">ATP-binding</keyword>
<keyword id="KW-0436">Ligase</keyword>
<keyword id="KW-0479">Metal-binding</keyword>
<keyword id="KW-0547">Nucleotide-binding</keyword>
<keyword id="KW-0671">Queuosine biosynthesis</keyword>
<keyword id="KW-0862">Zinc</keyword>
<organism>
    <name type="scientific">Vibrio parahaemolyticus serotype O3:K6 (strain RIMD 2210633)</name>
    <dbReference type="NCBI Taxonomy" id="223926"/>
    <lineage>
        <taxon>Bacteria</taxon>
        <taxon>Pseudomonadati</taxon>
        <taxon>Pseudomonadota</taxon>
        <taxon>Gammaproteobacteria</taxon>
        <taxon>Vibrionales</taxon>
        <taxon>Vibrionaceae</taxon>
        <taxon>Vibrio</taxon>
    </lineage>
</organism>
<reference key="1">
    <citation type="journal article" date="2003" name="Lancet">
        <title>Genome sequence of Vibrio parahaemolyticus: a pathogenic mechanism distinct from that of V. cholerae.</title>
        <authorList>
            <person name="Makino K."/>
            <person name="Oshima K."/>
            <person name="Kurokawa K."/>
            <person name="Yokoyama K."/>
            <person name="Uda T."/>
            <person name="Tagomori K."/>
            <person name="Iijima Y."/>
            <person name="Najima M."/>
            <person name="Nakano M."/>
            <person name="Yamashita A."/>
            <person name="Kubota Y."/>
            <person name="Kimura S."/>
            <person name="Yasunaga T."/>
            <person name="Honda T."/>
            <person name="Shinagawa H."/>
            <person name="Hattori M."/>
            <person name="Iida T."/>
        </authorList>
    </citation>
    <scope>NUCLEOTIDE SEQUENCE [LARGE SCALE GENOMIC DNA]</scope>
    <source>
        <strain>RIMD 2210633</strain>
    </source>
</reference>
<dbReference type="EC" id="6.3.4.20" evidence="1"/>
<dbReference type="EMBL" id="BA000031">
    <property type="protein sequence ID" value="BAC59901.1"/>
    <property type="molecule type" value="Genomic_DNA"/>
</dbReference>
<dbReference type="RefSeq" id="NP_798017.1">
    <property type="nucleotide sequence ID" value="NC_004603.1"/>
</dbReference>
<dbReference type="RefSeq" id="WP_005477815.1">
    <property type="nucleotide sequence ID" value="NC_004603.1"/>
</dbReference>
<dbReference type="SMR" id="Q87P80"/>
<dbReference type="GeneID" id="1189145"/>
<dbReference type="KEGG" id="vpa:VP1638"/>
<dbReference type="PATRIC" id="fig|223926.6.peg.1561"/>
<dbReference type="eggNOG" id="COG0603">
    <property type="taxonomic scope" value="Bacteria"/>
</dbReference>
<dbReference type="HOGENOM" id="CLU_081854_0_0_6"/>
<dbReference type="UniPathway" id="UPA00391"/>
<dbReference type="Proteomes" id="UP000002493">
    <property type="component" value="Chromosome 1"/>
</dbReference>
<dbReference type="GO" id="GO:0005524">
    <property type="term" value="F:ATP binding"/>
    <property type="evidence" value="ECO:0007669"/>
    <property type="project" value="UniProtKB-UniRule"/>
</dbReference>
<dbReference type="GO" id="GO:0016879">
    <property type="term" value="F:ligase activity, forming carbon-nitrogen bonds"/>
    <property type="evidence" value="ECO:0007669"/>
    <property type="project" value="UniProtKB-UniRule"/>
</dbReference>
<dbReference type="GO" id="GO:0008270">
    <property type="term" value="F:zinc ion binding"/>
    <property type="evidence" value="ECO:0007669"/>
    <property type="project" value="UniProtKB-UniRule"/>
</dbReference>
<dbReference type="GO" id="GO:0008616">
    <property type="term" value="P:queuosine biosynthetic process"/>
    <property type="evidence" value="ECO:0007669"/>
    <property type="project" value="UniProtKB-UniRule"/>
</dbReference>
<dbReference type="CDD" id="cd01995">
    <property type="entry name" value="QueC-like"/>
    <property type="match status" value="1"/>
</dbReference>
<dbReference type="FunFam" id="3.40.50.620:FF:000017">
    <property type="entry name" value="7-cyano-7-deazaguanine synthase"/>
    <property type="match status" value="1"/>
</dbReference>
<dbReference type="Gene3D" id="3.40.50.620">
    <property type="entry name" value="HUPs"/>
    <property type="match status" value="1"/>
</dbReference>
<dbReference type="HAMAP" id="MF_01633">
    <property type="entry name" value="QueC"/>
    <property type="match status" value="1"/>
</dbReference>
<dbReference type="InterPro" id="IPR018317">
    <property type="entry name" value="QueC"/>
</dbReference>
<dbReference type="InterPro" id="IPR014729">
    <property type="entry name" value="Rossmann-like_a/b/a_fold"/>
</dbReference>
<dbReference type="NCBIfam" id="TIGR00364">
    <property type="entry name" value="7-cyano-7-deazaguanine synthase QueC"/>
    <property type="match status" value="1"/>
</dbReference>
<dbReference type="NCBIfam" id="NF008317">
    <property type="entry name" value="PRK11106.1"/>
    <property type="match status" value="1"/>
</dbReference>
<dbReference type="PANTHER" id="PTHR42914">
    <property type="entry name" value="7-CYANO-7-DEAZAGUANINE SYNTHASE"/>
    <property type="match status" value="1"/>
</dbReference>
<dbReference type="PANTHER" id="PTHR42914:SF1">
    <property type="entry name" value="7-CYANO-7-DEAZAGUANINE SYNTHASE"/>
    <property type="match status" value="1"/>
</dbReference>
<dbReference type="Pfam" id="PF06508">
    <property type="entry name" value="QueC"/>
    <property type="match status" value="1"/>
</dbReference>
<dbReference type="PIRSF" id="PIRSF006293">
    <property type="entry name" value="ExsB"/>
    <property type="match status" value="1"/>
</dbReference>
<dbReference type="SUPFAM" id="SSF52402">
    <property type="entry name" value="Adenine nucleotide alpha hydrolases-like"/>
    <property type="match status" value="1"/>
</dbReference>
<accession>Q87P80</accession>
<gene>
    <name evidence="1" type="primary">queC</name>
    <name type="ordered locus">VP1638</name>
</gene>